<evidence type="ECO:0000255" key="1">
    <source>
        <dbReference type="PROSITE-ProRule" id="PRU00154"/>
    </source>
</evidence>
<evidence type="ECO:0000255" key="2">
    <source>
        <dbReference type="PROSITE-ProRule" id="PRU00159"/>
    </source>
</evidence>
<evidence type="ECO:0000255" key="3">
    <source>
        <dbReference type="PROSITE-ProRule" id="PRU10027"/>
    </source>
</evidence>
<evidence type="ECO:0000256" key="4">
    <source>
        <dbReference type="SAM" id="MobiDB-lite"/>
    </source>
</evidence>
<evidence type="ECO:0000269" key="5">
    <source>
    </source>
</evidence>
<evidence type="ECO:0000269" key="6">
    <source>
    </source>
</evidence>
<evidence type="ECO:0000269" key="7">
    <source>
    </source>
</evidence>
<evidence type="ECO:0000269" key="8">
    <source>
    </source>
</evidence>
<evidence type="ECO:0000269" key="9">
    <source>
    </source>
</evidence>
<evidence type="ECO:0000305" key="10"/>
<evidence type="ECO:0000312" key="11">
    <source>
        <dbReference type="EMBL" id="AAF28314.1"/>
    </source>
</evidence>
<evidence type="ECO:0000312" key="12">
    <source>
        <dbReference type="WormBase" id="Y71F9B.7"/>
    </source>
</evidence>
<comment type="function">
    <text evidence="5 6 7 8 9">Serine/threonine-protein kinase which plays a role, during oogenesis, in chromosome pairing and synapsis, by facilitating the recruitment and attachment of meiotic chromosomes to the nuclear envelope during prophase (PubMed:22018921, PubMed:22018922). Promotes the localization of brc-1 to the short arm of homologous chromosomes during meiotic prophase I (PubMed:30383754). Regulates the formation of sun-1 patches along the nuclear envelope (PubMed:22018921, PubMed:22018922). Promotes meiotic nuclei apoptosis in response to chromosomal asynapsis (PubMed:22018922). Plays a redundant role with plk-1 in the establishment of cell polarity downstream of mex-5 and mex-6 during the first embryonic cell divisions (PubMed:18199581). Plays a role in nicotinic acetylcholine receptor-mediated sensitivity to nicotine but not levamisole (PubMed:15990870). Regulates motility (PubMed:15990870).</text>
</comment>
<comment type="catalytic activity">
    <reaction evidence="7">
        <text>L-seryl-[protein] + ATP = O-phospho-L-seryl-[protein] + ADP + H(+)</text>
        <dbReference type="Rhea" id="RHEA:17989"/>
        <dbReference type="Rhea" id="RHEA-COMP:9863"/>
        <dbReference type="Rhea" id="RHEA-COMP:11604"/>
        <dbReference type="ChEBI" id="CHEBI:15378"/>
        <dbReference type="ChEBI" id="CHEBI:29999"/>
        <dbReference type="ChEBI" id="CHEBI:30616"/>
        <dbReference type="ChEBI" id="CHEBI:83421"/>
        <dbReference type="ChEBI" id="CHEBI:456216"/>
        <dbReference type="EC" id="2.7.11.21"/>
    </reaction>
</comment>
<comment type="catalytic activity">
    <reaction evidence="7">
        <text>L-threonyl-[protein] + ATP = O-phospho-L-threonyl-[protein] + ADP + H(+)</text>
        <dbReference type="Rhea" id="RHEA:46608"/>
        <dbReference type="Rhea" id="RHEA-COMP:11060"/>
        <dbReference type="Rhea" id="RHEA-COMP:11605"/>
        <dbReference type="ChEBI" id="CHEBI:15378"/>
        <dbReference type="ChEBI" id="CHEBI:30013"/>
        <dbReference type="ChEBI" id="CHEBI:30616"/>
        <dbReference type="ChEBI" id="CHEBI:61977"/>
        <dbReference type="ChEBI" id="CHEBI:456216"/>
        <dbReference type="EC" id="2.7.11.21"/>
    </reaction>
</comment>
<comment type="cofactor">
    <cofactor evidence="7">
        <name>Mg(2+)</name>
        <dbReference type="ChEBI" id="CHEBI:18420"/>
    </cofactor>
</comment>
<comment type="subunit">
    <text evidence="5 6 7 8">Interacts (via POLO box domain) with mex-5 and mex-6 (PubMed:18199581, PubMed:22018922). Interacts (via POLO box domain) with him-8 (via N-terminus); the interaction mediates plk-2 recruitment to the pairing region of X chromosomes during meiosis (PubMed:22018922). Interacts with sun-1 (PubMed:22018921). May interact with nicotinic acetylcholine receptor (PubMed:15990870).</text>
</comment>
<comment type="subcellular location">
    <subcellularLocation>
        <location evidence="7 8 9">Nucleus</location>
    </subcellularLocation>
    <subcellularLocation>
        <location evidence="6">Cytoplasm</location>
    </subcellularLocation>
    <subcellularLocation>
        <location evidence="8">Cytoplasm</location>
        <location evidence="8">Cytoskeleton</location>
        <location evidence="8">Microtubule organizing center</location>
        <location evidence="8">Centrosome</location>
    </subcellularLocation>
    <subcellularLocation>
        <location evidence="8">Chromosome</location>
        <location evidence="8">Centromere</location>
        <location evidence="8">Kinetochore</location>
    </subcellularLocation>
    <subcellularLocation>
        <location evidence="7 8">Chromosome</location>
    </subcellularLocation>
    <text evidence="6 7 8 9">During meiosis I, localizes to chromosome pairing centers formed at the nuclear envelope in early pachytene and then to the synaptonemal complex in mid and late pachytene (PubMed:22018921, PubMed:22018922). Co-localizes at pairing centers with him-8, zim-3, zyg-12 and sun-1 and partially with plk-1 in early prophase (PubMed:22018921, PubMed:22018922). Co-localizes with syp-1 in synapsed chromosomes at pachytene (PubMed:22018921). Co-localizes with brc-1 in pachytene nuclei (PubMed:30383754). Localizes asymmetrically in the 1-cell embryo which results in higher levels in the somatic cell AB than in the germline blastomere P1 (PubMed:18199581).</text>
</comment>
<comment type="tissue specificity">
    <text evidence="7 8">Expressed in oocytes.</text>
</comment>
<comment type="developmental stage">
    <text evidence="6">Expressed in the early stages of embryogenesis.</text>
</comment>
<comment type="disruption phenotype">
    <text evidence="6 8">Mutants are viable and fertile but about 30-percent of the progeny die at the embryonic stage. Surviving adults are mostly male (PubMed:22018922). Impaired chromosome pairing and synapsis during meiotic prophase. Asymmetric disassembly of the synaptonemal complex fails at the diplotene stage. Partial mis-segregation of chromosomes. Increased germline apoptosis (PubMed:22018922). Simultaneous knockdown of plk-1 and plk-2 causes a loss in pie-1 polarization in the 1-cell embryo, an increased association with the oocyte pronuclei and a decrease in pie-1 degradation in embryonic somatic cells (PubMed:18199581).</text>
</comment>
<comment type="similarity">
    <text evidence="2">Belongs to the protein kinase superfamily. Ser/Thr protein kinase family. CDC5/Polo subfamily.</text>
</comment>
<protein>
    <recommendedName>
        <fullName>Serine/threonine-protein kinase plk-2</fullName>
        <ecNumber evidence="7">2.7.11.21</ecNumber>
    </recommendedName>
    <alternativeName>
        <fullName>Polo-like kinase 2</fullName>
    </alternativeName>
</protein>
<feature type="chain" id="PRO_0000086570" description="Serine/threonine-protein kinase plk-2">
    <location>
        <begin position="1"/>
        <end position="632"/>
    </location>
</feature>
<feature type="domain" description="Protein kinase" evidence="2">
    <location>
        <begin position="36"/>
        <end position="287"/>
    </location>
</feature>
<feature type="domain" description="POLO box 1" evidence="1">
    <location>
        <begin position="405"/>
        <end position="484"/>
    </location>
</feature>
<feature type="domain" description="POLO box 2" evidence="1">
    <location>
        <begin position="506"/>
        <end position="588"/>
    </location>
</feature>
<feature type="region of interest" description="Disordered" evidence="4">
    <location>
        <begin position="1"/>
        <end position="26"/>
    </location>
</feature>
<feature type="region of interest" description="Disordered" evidence="4">
    <location>
        <begin position="313"/>
        <end position="334"/>
    </location>
</feature>
<feature type="active site" description="Proton acceptor" evidence="2 3">
    <location>
        <position position="159"/>
    </location>
</feature>
<feature type="binding site" evidence="2">
    <location>
        <begin position="42"/>
        <end position="50"/>
    </location>
    <ligand>
        <name>ATP</name>
        <dbReference type="ChEBI" id="CHEBI:30616"/>
    </ligand>
</feature>
<feature type="binding site" evidence="2">
    <location>
        <position position="65"/>
    </location>
    <ligand>
        <name>ATP</name>
        <dbReference type="ChEBI" id="CHEBI:30616"/>
    </ligand>
</feature>
<feature type="mutagenesis site" description="In vv44; Loss of proper chromosome pairing and early initiation of synapsis resulting in a loss of chiasma formation and chromosome segregation during oocyte meiosis I. Severe embryonic lethality and the few surviving adults are mostly male. Loss of sun-1 and zyg-12 patch formation along the nuclear envelope and of sun-1 phosphorylation at 'Thr-12' during early prophase." evidence="7">
    <original>P</original>
    <variation>L</variation>
    <location>
        <position position="197"/>
    </location>
</feature>
<dbReference type="EC" id="2.7.11.21" evidence="7"/>
<dbReference type="EMBL" id="AF194964">
    <property type="protein sequence ID" value="AAF28314.1"/>
    <property type="molecule type" value="mRNA"/>
</dbReference>
<dbReference type="EMBL" id="BX284601">
    <property type="protein sequence ID" value="CCD70415.1"/>
    <property type="molecule type" value="Genomic_DNA"/>
</dbReference>
<dbReference type="RefSeq" id="NP_491036.1">
    <property type="nucleotide sequence ID" value="NM_058635.8"/>
</dbReference>
<dbReference type="SMR" id="Q9N2L7"/>
<dbReference type="BioGRID" id="37319">
    <property type="interactions" value="22"/>
</dbReference>
<dbReference type="FunCoup" id="Q9N2L7">
    <property type="interactions" value="792"/>
</dbReference>
<dbReference type="IntAct" id="Q9N2L7">
    <property type="interactions" value="2"/>
</dbReference>
<dbReference type="MINT" id="Q9N2L7"/>
<dbReference type="STRING" id="6239.Y71F9B.7.1"/>
<dbReference type="iPTMnet" id="Q9N2L7"/>
<dbReference type="PaxDb" id="6239-Y71F9B.7"/>
<dbReference type="PeptideAtlas" id="Q9N2L7"/>
<dbReference type="EnsemblMetazoa" id="Y71F9B.7.1">
    <property type="protein sequence ID" value="Y71F9B.7.1"/>
    <property type="gene ID" value="WBGene00004043"/>
</dbReference>
<dbReference type="GeneID" id="171838"/>
<dbReference type="KEGG" id="cel:CELE_Y71F9B.7"/>
<dbReference type="UCSC" id="Y71F9B.7.1">
    <property type="organism name" value="c. elegans"/>
</dbReference>
<dbReference type="AGR" id="WB:WBGene00004043"/>
<dbReference type="CTD" id="171838"/>
<dbReference type="WormBase" id="Y71F9B.7">
    <property type="protein sequence ID" value="CE22877"/>
    <property type="gene ID" value="WBGene00004043"/>
    <property type="gene designation" value="plk-2"/>
</dbReference>
<dbReference type="eggNOG" id="KOG0575">
    <property type="taxonomic scope" value="Eukaryota"/>
</dbReference>
<dbReference type="GeneTree" id="ENSGT00940000166918"/>
<dbReference type="HOGENOM" id="CLU_000288_46_1_1"/>
<dbReference type="InParanoid" id="Q9N2L7"/>
<dbReference type="OMA" id="CLTMVPH"/>
<dbReference type="OrthoDB" id="408964at2759"/>
<dbReference type="PhylomeDB" id="Q9N2L7"/>
<dbReference type="BRENDA" id="2.7.11.21">
    <property type="organism ID" value="1045"/>
</dbReference>
<dbReference type="Reactome" id="R-CEL-156711">
    <property type="pathway name" value="Polo-like kinase mediated events"/>
</dbReference>
<dbReference type="Reactome" id="R-CEL-162658">
    <property type="pathway name" value="Golgi Cisternae Pericentriolar Stack Reorganization"/>
</dbReference>
<dbReference type="Reactome" id="R-CEL-2299718">
    <property type="pathway name" value="Condensation of Prophase Chromosomes"/>
</dbReference>
<dbReference type="Reactome" id="R-CEL-2500257">
    <property type="pathway name" value="Resolution of Sister Chromatid Cohesion"/>
</dbReference>
<dbReference type="Reactome" id="R-CEL-2565942">
    <property type="pathway name" value="Regulation of PLK1 Activity at G2/M Transition"/>
</dbReference>
<dbReference type="Reactome" id="R-CEL-2980767">
    <property type="pathway name" value="Activation of NIMA Kinases NEK9, NEK6, NEK7"/>
</dbReference>
<dbReference type="Reactome" id="R-CEL-68884">
    <property type="pathway name" value="Mitotic Telophase/Cytokinesis"/>
</dbReference>
<dbReference type="Reactome" id="R-CEL-69273">
    <property type="pathway name" value="Cyclin A/B1/B2 associated events during G2/M transition"/>
</dbReference>
<dbReference type="Reactome" id="R-CEL-9648025">
    <property type="pathway name" value="EML4 and NUDC in mitotic spindle formation"/>
</dbReference>
<dbReference type="PRO" id="PR:Q9N2L7"/>
<dbReference type="Proteomes" id="UP000001940">
    <property type="component" value="Chromosome I"/>
</dbReference>
<dbReference type="Bgee" id="WBGene00004043">
    <property type="expression patterns" value="Expressed in germ line (C elegans) and 3 other cell types or tissues"/>
</dbReference>
<dbReference type="GO" id="GO:0005813">
    <property type="term" value="C:centrosome"/>
    <property type="evidence" value="ECO:0000318"/>
    <property type="project" value="GO_Central"/>
</dbReference>
<dbReference type="GO" id="GO:0005737">
    <property type="term" value="C:cytoplasm"/>
    <property type="evidence" value="ECO:0000314"/>
    <property type="project" value="WormBase"/>
</dbReference>
<dbReference type="GO" id="GO:0000776">
    <property type="term" value="C:kinetochore"/>
    <property type="evidence" value="ECO:0000318"/>
    <property type="project" value="GO_Central"/>
</dbReference>
<dbReference type="GO" id="GO:0005634">
    <property type="term" value="C:nucleus"/>
    <property type="evidence" value="ECO:0000318"/>
    <property type="project" value="GO_Central"/>
</dbReference>
<dbReference type="GO" id="GO:0000922">
    <property type="term" value="C:spindle pole"/>
    <property type="evidence" value="ECO:0000318"/>
    <property type="project" value="GO_Central"/>
</dbReference>
<dbReference type="GO" id="GO:0005524">
    <property type="term" value="F:ATP binding"/>
    <property type="evidence" value="ECO:0007669"/>
    <property type="project" value="UniProtKB-KW"/>
</dbReference>
<dbReference type="GO" id="GO:0106310">
    <property type="term" value="F:protein serine kinase activity"/>
    <property type="evidence" value="ECO:0007669"/>
    <property type="project" value="RHEA"/>
</dbReference>
<dbReference type="GO" id="GO:0004674">
    <property type="term" value="F:protein serine/threonine kinase activity"/>
    <property type="evidence" value="ECO:0000318"/>
    <property type="project" value="GO_Central"/>
</dbReference>
<dbReference type="GO" id="GO:0051321">
    <property type="term" value="P:meiotic cell cycle"/>
    <property type="evidence" value="ECO:0007669"/>
    <property type="project" value="UniProtKB-KW"/>
</dbReference>
<dbReference type="GO" id="GO:0007052">
    <property type="term" value="P:mitotic spindle organization"/>
    <property type="evidence" value="ECO:0000318"/>
    <property type="project" value="GO_Central"/>
</dbReference>
<dbReference type="GO" id="GO:0060631">
    <property type="term" value="P:regulation of meiosis I"/>
    <property type="evidence" value="ECO:0000315"/>
    <property type="project" value="WormBase"/>
</dbReference>
<dbReference type="CDD" id="cd13118">
    <property type="entry name" value="POLO_box_1"/>
    <property type="match status" value="1"/>
</dbReference>
<dbReference type="CDD" id="cd13117">
    <property type="entry name" value="POLO_box_2"/>
    <property type="match status" value="1"/>
</dbReference>
<dbReference type="CDD" id="cd14099">
    <property type="entry name" value="STKc_PLK"/>
    <property type="match status" value="1"/>
</dbReference>
<dbReference type="FunFam" id="1.10.510.10:FF:000727">
    <property type="entry name" value="Serine/threonine-protein kinase PLK"/>
    <property type="match status" value="1"/>
</dbReference>
<dbReference type="FunFam" id="3.30.1120.30:FF:000001">
    <property type="entry name" value="Serine/threonine-protein kinase PLK"/>
    <property type="match status" value="1"/>
</dbReference>
<dbReference type="FunFam" id="3.30.200.20:FF:000091">
    <property type="entry name" value="Serine/threonine-protein kinase PLK"/>
    <property type="match status" value="1"/>
</dbReference>
<dbReference type="Gene3D" id="3.30.200.20">
    <property type="entry name" value="Phosphorylase Kinase, domain 1"/>
    <property type="match status" value="1"/>
</dbReference>
<dbReference type="Gene3D" id="3.30.1120.30">
    <property type="entry name" value="POLO box domain"/>
    <property type="match status" value="2"/>
</dbReference>
<dbReference type="Gene3D" id="1.10.510.10">
    <property type="entry name" value="Transferase(Phosphotransferase) domain 1"/>
    <property type="match status" value="1"/>
</dbReference>
<dbReference type="InterPro" id="IPR011009">
    <property type="entry name" value="Kinase-like_dom_sf"/>
</dbReference>
<dbReference type="InterPro" id="IPR033701">
    <property type="entry name" value="POLO_box_1"/>
</dbReference>
<dbReference type="InterPro" id="IPR033695">
    <property type="entry name" value="POLO_box_2"/>
</dbReference>
<dbReference type="InterPro" id="IPR000959">
    <property type="entry name" value="POLO_box_dom"/>
</dbReference>
<dbReference type="InterPro" id="IPR036947">
    <property type="entry name" value="POLO_box_dom_sf"/>
</dbReference>
<dbReference type="InterPro" id="IPR000719">
    <property type="entry name" value="Prot_kinase_dom"/>
</dbReference>
<dbReference type="InterPro" id="IPR017441">
    <property type="entry name" value="Protein_kinase_ATP_BS"/>
</dbReference>
<dbReference type="InterPro" id="IPR008271">
    <property type="entry name" value="Ser/Thr_kinase_AS"/>
</dbReference>
<dbReference type="PANTHER" id="PTHR24345">
    <property type="entry name" value="SERINE/THREONINE-PROTEIN KINASE PLK"/>
    <property type="match status" value="1"/>
</dbReference>
<dbReference type="PANTHER" id="PTHR24345:SF93">
    <property type="entry name" value="SERINE_THREONINE-PROTEIN KINASE PLK1"/>
    <property type="match status" value="1"/>
</dbReference>
<dbReference type="Pfam" id="PF00069">
    <property type="entry name" value="Pkinase"/>
    <property type="match status" value="1"/>
</dbReference>
<dbReference type="Pfam" id="PF00659">
    <property type="entry name" value="POLO_box"/>
    <property type="match status" value="2"/>
</dbReference>
<dbReference type="SMART" id="SM00220">
    <property type="entry name" value="S_TKc"/>
    <property type="match status" value="1"/>
</dbReference>
<dbReference type="SUPFAM" id="SSF82615">
    <property type="entry name" value="Polo-box domain"/>
    <property type="match status" value="2"/>
</dbReference>
<dbReference type="SUPFAM" id="SSF56112">
    <property type="entry name" value="Protein kinase-like (PK-like)"/>
    <property type="match status" value="1"/>
</dbReference>
<dbReference type="PROSITE" id="PS50078">
    <property type="entry name" value="POLO_BOX"/>
    <property type="match status" value="2"/>
</dbReference>
<dbReference type="PROSITE" id="PS00107">
    <property type="entry name" value="PROTEIN_KINASE_ATP"/>
    <property type="match status" value="1"/>
</dbReference>
<dbReference type="PROSITE" id="PS50011">
    <property type="entry name" value="PROTEIN_KINASE_DOM"/>
    <property type="match status" value="1"/>
</dbReference>
<dbReference type="PROSITE" id="PS00108">
    <property type="entry name" value="PROTEIN_KINASE_ST"/>
    <property type="match status" value="1"/>
</dbReference>
<reference evidence="10" key="1">
    <citation type="journal article" date="2000" name="DNA Seq.">
        <title>Caenorhabditis elegans contains a third polo-like kinase gene.</title>
        <authorList>
            <person name="Chase D."/>
            <person name="Golden A."/>
            <person name="Heidecker G."/>
            <person name="Ferris D.K."/>
        </authorList>
    </citation>
    <scope>NUCLEOTIDE SEQUENCE [MRNA]</scope>
</reference>
<reference key="2">
    <citation type="journal article" date="1998" name="Science">
        <title>Genome sequence of the nematode C. elegans: a platform for investigating biology.</title>
        <authorList>
            <consortium name="The C. elegans sequencing consortium"/>
        </authorList>
    </citation>
    <scope>NUCLEOTIDE SEQUENCE [LARGE SCALE GENOMIC DNA]</scope>
    <source>
        <strain>Bristol N2</strain>
    </source>
</reference>
<reference key="3">
    <citation type="journal article" date="2005" name="EMBO J.">
        <title>Identification and characterization of novel nicotinic receptor-associated proteins in Caenorhabditis elegans.</title>
        <authorList>
            <person name="Gottschalk A."/>
            <person name="Almedom R.B."/>
            <person name="Schedletzky T."/>
            <person name="Anderson S.D."/>
            <person name="Yates J.R. III"/>
            <person name="Schafer W.R."/>
        </authorList>
    </citation>
    <scope>FUNCTION</scope>
    <scope>INTERACTION WITH NICOTINIC ACETYLCHOLINE RECEPTOR</scope>
</reference>
<reference key="4">
    <citation type="journal article" date="2008" name="Development">
        <title>Polo kinases regulate C. elegans embryonic polarity via binding to DYRK2-primed MEX-5 and MEX-6.</title>
        <authorList>
            <person name="Nishi Y."/>
            <person name="Rogers E."/>
            <person name="Robertson S.M."/>
            <person name="Lin R."/>
        </authorList>
    </citation>
    <scope>FUNCTION</scope>
    <scope>INTERACTION WITH MEX-5 AND MEX-6</scope>
    <scope>SUBCELLULAR LOCATION</scope>
    <scope>DEVELOPMENTAL STAGE</scope>
    <scope>DISRUPTION PHENOTYPE</scope>
</reference>
<reference key="5">
    <citation type="journal article" date="2011" name="Dev. Cell">
        <title>Pairing centers recruit a Polo-like kinase to orchestrate meiotic chromosome dynamics in C. elegans.</title>
        <authorList>
            <person name="Harper N.C."/>
            <person name="Rillo R."/>
            <person name="Jover-Gil S."/>
            <person name="Assaf Z.J."/>
            <person name="Bhalla N."/>
            <person name="Dernburg A.F."/>
        </authorList>
    </citation>
    <scope>FUNCTION</scope>
    <scope>INTERACTION WITH HIM-8; MEX-5 AND MEX-6</scope>
    <scope>SUBCELLULAR LOCATION</scope>
    <scope>TISSUE SPECIFICITY</scope>
    <scope>DISRUPTION PHENOTYPE</scope>
</reference>
<reference key="6">
    <citation type="journal article" date="2011" name="Dev. Cell">
        <title>Polo kinases establish links between meiotic chromosomes and cytoskeletal forces essential for homolog pairing.</title>
        <authorList>
            <person name="Labella S."/>
            <person name="Woglar A."/>
            <person name="Jantsch V."/>
            <person name="Zetka M."/>
        </authorList>
    </citation>
    <scope>FUNCTION</scope>
    <scope>CATALYTIC ACTIVITY</scope>
    <scope>COFACTOR</scope>
    <scope>INTERACTION WITH SUN-1</scope>
    <scope>SUBCELLULAR LOCATION</scope>
    <scope>TISSUE SPECIFICITY</scope>
    <scope>MUTAGENESIS OF PRO-197</scope>
</reference>
<reference key="7">
    <citation type="journal article" date="2018" name="PLoS Genet.">
        <title>BRCA1-BARD1 associate with the synaptonemal complex and pro-crossover factors and influence RAD-51 dynamics during Caenorhabditis elegans meiosis.</title>
        <authorList>
            <person name="Janisiw E."/>
            <person name="Dello Stritto M.R."/>
            <person name="Jantsch V."/>
            <person name="Silva N."/>
        </authorList>
    </citation>
    <scope>FUNCTION</scope>
    <scope>SUBCELLULAR LOCATION</scope>
</reference>
<organism evidence="11">
    <name type="scientific">Caenorhabditis elegans</name>
    <dbReference type="NCBI Taxonomy" id="6239"/>
    <lineage>
        <taxon>Eukaryota</taxon>
        <taxon>Metazoa</taxon>
        <taxon>Ecdysozoa</taxon>
        <taxon>Nematoda</taxon>
        <taxon>Chromadorea</taxon>
        <taxon>Rhabditida</taxon>
        <taxon>Rhabditina</taxon>
        <taxon>Rhabditomorpha</taxon>
        <taxon>Rhabditoidea</taxon>
        <taxon>Rhabditidae</taxon>
        <taxon>Peloderinae</taxon>
        <taxon>Caenorhabditis</taxon>
    </lineage>
</organism>
<sequence length="632" mass="72071">MQRVQPSAARVKSQKKEKAPPDVPDVILDGERKTRYEKGKFLGKGGFAHCYELRNKSTGELFAGKVVPKALLIKQYQRDKMAQEVQIHRNLQHRNVVKLYHFFEDKSNVYITLELCPRRSLMELHKRRKAVTEPEARYFTYQIVEGVLYLHNLKIVHRDLKLGNLFLNDELQVKIGDFGLATTCDNDERKKTLCGTPNYIAPEVLNKIGHSFEVDLWAIGCILYILLFGHPPFESKSLEETYSRIKNNNYVIPTSASAAASQLIRVLLDPVPSRRPNARAVCRDHFFKSGFMPARLPVSCLTMVPHLNDDEYAEENVSPSGTIDQRGPHQAGRSGLSAIPAHLVSRNSERQQTHRMEAYRQPTDCYLSNLLAQVNDLLATPTADIDDAEAALDSYQSPEALPVFWISKWVDYSDKYGIGYQLCDNSVGVLFNDNSRIMLDTAGTQLTYIEKTEKEHYFDMESAIPSGLQKKMTLLKYFRSYMNDHLLQAGQQVTRKVGDDLARLPTLRVWFRTKSAIVLHLSNGTVQINFFNDHIKMVLCPLMQAVTFIDENKRMFTYKFSHLAENGCPEKFLHRIQYAKCMIQRLVEEHTKEETKHNAPAANAVRLPSTSSNVRLESAADIQPAYPSSSRR</sequence>
<keyword id="KW-0067">ATP-binding</keyword>
<keyword id="KW-0137">Centromere</keyword>
<keyword id="KW-0158">Chromosome</keyword>
<keyword id="KW-0963">Cytoplasm</keyword>
<keyword id="KW-0206">Cytoskeleton</keyword>
<keyword id="KW-0418">Kinase</keyword>
<keyword id="KW-0995">Kinetochore</keyword>
<keyword id="KW-0469">Meiosis</keyword>
<keyword id="KW-0547">Nucleotide-binding</keyword>
<keyword id="KW-0539">Nucleus</keyword>
<keyword id="KW-1185">Reference proteome</keyword>
<keyword id="KW-0677">Repeat</keyword>
<keyword id="KW-0723">Serine/threonine-protein kinase</keyword>
<keyword id="KW-0808">Transferase</keyword>
<accession>Q9N2L7</accession>
<gene>
    <name evidence="12" type="primary">plk-2</name>
    <name evidence="12" type="ORF">Y71F9B.7</name>
</gene>
<proteinExistence type="evidence at protein level"/>
<name>PLK2_CAEEL</name>